<sequence>MDYTLTRIDPNGENDRYPLQKQEIVTDPLEQEVNKNVFMGKLHDMVNWGRKNSIWPYNFGLSCCYVEMVTSFTAVHDVARFGAEVLRASPRQADLMVVAGTCFTKMAPVIQRLYDQMLEPKWVISMGACANSGGMYDIYSVVQGVDKFIPVDVYIPGCPPRPEAYMQALMLLQESIGKERRPLSWVVGDQGVYRANMQPERERKRGERIAVTNLRTPDEI</sequence>
<gene>
    <name evidence="1" type="primary">nuoB</name>
    <name type="ordered locus">SSPA0501</name>
</gene>
<dbReference type="EC" id="7.1.1.-" evidence="1"/>
<dbReference type="EMBL" id="FM200053">
    <property type="protein sequence ID" value="CAR58630.1"/>
    <property type="molecule type" value="Genomic_DNA"/>
</dbReference>
<dbReference type="RefSeq" id="WP_000386728.1">
    <property type="nucleotide sequence ID" value="NC_011147.1"/>
</dbReference>
<dbReference type="SMR" id="B5BCL9"/>
<dbReference type="KEGG" id="sek:SSPA0501"/>
<dbReference type="HOGENOM" id="CLU_055737_7_3_6"/>
<dbReference type="Proteomes" id="UP000001869">
    <property type="component" value="Chromosome"/>
</dbReference>
<dbReference type="GO" id="GO:0005886">
    <property type="term" value="C:plasma membrane"/>
    <property type="evidence" value="ECO:0007669"/>
    <property type="project" value="UniProtKB-SubCell"/>
</dbReference>
<dbReference type="GO" id="GO:0045271">
    <property type="term" value="C:respiratory chain complex I"/>
    <property type="evidence" value="ECO:0007669"/>
    <property type="project" value="TreeGrafter"/>
</dbReference>
<dbReference type="GO" id="GO:0051539">
    <property type="term" value="F:4 iron, 4 sulfur cluster binding"/>
    <property type="evidence" value="ECO:0007669"/>
    <property type="project" value="UniProtKB-KW"/>
</dbReference>
<dbReference type="GO" id="GO:0005506">
    <property type="term" value="F:iron ion binding"/>
    <property type="evidence" value="ECO:0007669"/>
    <property type="project" value="UniProtKB-UniRule"/>
</dbReference>
<dbReference type="GO" id="GO:0008137">
    <property type="term" value="F:NADH dehydrogenase (ubiquinone) activity"/>
    <property type="evidence" value="ECO:0007669"/>
    <property type="project" value="InterPro"/>
</dbReference>
<dbReference type="GO" id="GO:0050136">
    <property type="term" value="F:NADH:ubiquinone reductase (non-electrogenic) activity"/>
    <property type="evidence" value="ECO:0007669"/>
    <property type="project" value="UniProtKB-UniRule"/>
</dbReference>
<dbReference type="GO" id="GO:0048038">
    <property type="term" value="F:quinone binding"/>
    <property type="evidence" value="ECO:0007669"/>
    <property type="project" value="UniProtKB-KW"/>
</dbReference>
<dbReference type="GO" id="GO:0009060">
    <property type="term" value="P:aerobic respiration"/>
    <property type="evidence" value="ECO:0007669"/>
    <property type="project" value="TreeGrafter"/>
</dbReference>
<dbReference type="GO" id="GO:0015990">
    <property type="term" value="P:electron transport coupled proton transport"/>
    <property type="evidence" value="ECO:0007669"/>
    <property type="project" value="TreeGrafter"/>
</dbReference>
<dbReference type="FunFam" id="3.40.50.12280:FF:000002">
    <property type="entry name" value="NADH-quinone oxidoreductase subunit B"/>
    <property type="match status" value="1"/>
</dbReference>
<dbReference type="Gene3D" id="3.40.50.12280">
    <property type="match status" value="1"/>
</dbReference>
<dbReference type="HAMAP" id="MF_01356">
    <property type="entry name" value="NDH1_NuoB"/>
    <property type="match status" value="1"/>
</dbReference>
<dbReference type="InterPro" id="IPR006137">
    <property type="entry name" value="NADH_UbQ_OxRdtase-like_20kDa"/>
</dbReference>
<dbReference type="InterPro" id="IPR006138">
    <property type="entry name" value="NADH_UQ_OxRdtase_20Kd_su"/>
</dbReference>
<dbReference type="NCBIfam" id="TIGR01957">
    <property type="entry name" value="nuoB_fam"/>
    <property type="match status" value="1"/>
</dbReference>
<dbReference type="NCBIfam" id="NF005012">
    <property type="entry name" value="PRK06411.1"/>
    <property type="match status" value="1"/>
</dbReference>
<dbReference type="PANTHER" id="PTHR11995">
    <property type="entry name" value="NADH DEHYDROGENASE"/>
    <property type="match status" value="1"/>
</dbReference>
<dbReference type="PANTHER" id="PTHR11995:SF14">
    <property type="entry name" value="NADH DEHYDROGENASE [UBIQUINONE] IRON-SULFUR PROTEIN 7, MITOCHONDRIAL"/>
    <property type="match status" value="1"/>
</dbReference>
<dbReference type="Pfam" id="PF01058">
    <property type="entry name" value="Oxidored_q6"/>
    <property type="match status" value="1"/>
</dbReference>
<dbReference type="SUPFAM" id="SSF56770">
    <property type="entry name" value="HydA/Nqo6-like"/>
    <property type="match status" value="1"/>
</dbReference>
<dbReference type="PROSITE" id="PS01150">
    <property type="entry name" value="COMPLEX1_20K"/>
    <property type="match status" value="1"/>
</dbReference>
<keyword id="KW-0004">4Fe-4S</keyword>
<keyword id="KW-0997">Cell inner membrane</keyword>
<keyword id="KW-1003">Cell membrane</keyword>
<keyword id="KW-0408">Iron</keyword>
<keyword id="KW-0411">Iron-sulfur</keyword>
<keyword id="KW-0472">Membrane</keyword>
<keyword id="KW-0479">Metal-binding</keyword>
<keyword id="KW-0520">NAD</keyword>
<keyword id="KW-0874">Quinone</keyword>
<keyword id="KW-1278">Translocase</keyword>
<keyword id="KW-0813">Transport</keyword>
<keyword id="KW-0830">Ubiquinone</keyword>
<comment type="function">
    <text evidence="1">NDH-1 shuttles electrons from NADH, via FMN and iron-sulfur (Fe-S) centers, to quinones in the respiratory chain. The immediate electron acceptor for the enzyme in this species is believed to be ubiquinone. Couples the redox reaction to proton translocation (for every two electrons transferred, four hydrogen ions are translocated across the cytoplasmic membrane), and thus conserves the redox energy in a proton gradient.</text>
</comment>
<comment type="catalytic activity">
    <reaction evidence="1">
        <text>a quinone + NADH + 5 H(+)(in) = a quinol + NAD(+) + 4 H(+)(out)</text>
        <dbReference type="Rhea" id="RHEA:57888"/>
        <dbReference type="ChEBI" id="CHEBI:15378"/>
        <dbReference type="ChEBI" id="CHEBI:24646"/>
        <dbReference type="ChEBI" id="CHEBI:57540"/>
        <dbReference type="ChEBI" id="CHEBI:57945"/>
        <dbReference type="ChEBI" id="CHEBI:132124"/>
    </reaction>
</comment>
<comment type="cofactor">
    <cofactor evidence="1">
        <name>[4Fe-4S] cluster</name>
        <dbReference type="ChEBI" id="CHEBI:49883"/>
    </cofactor>
    <text evidence="1">Binds 1 [4Fe-4S] cluster.</text>
</comment>
<comment type="subunit">
    <text evidence="1">NDH-1 is composed of 13 different subunits. Subunits NuoB, CD, E, F, and G constitute the peripheral sector of the complex.</text>
</comment>
<comment type="subcellular location">
    <subcellularLocation>
        <location evidence="1">Cell inner membrane</location>
        <topology evidence="1">Peripheral membrane protein</topology>
        <orientation evidence="1">Cytoplasmic side</orientation>
    </subcellularLocation>
</comment>
<comment type="similarity">
    <text evidence="1">Belongs to the complex I 20 kDa subunit family.</text>
</comment>
<feature type="chain" id="PRO_0000376368" description="NADH-quinone oxidoreductase subunit B">
    <location>
        <begin position="1"/>
        <end position="220"/>
    </location>
</feature>
<feature type="binding site" evidence="1">
    <location>
        <position position="63"/>
    </location>
    <ligand>
        <name>[4Fe-4S] cluster</name>
        <dbReference type="ChEBI" id="CHEBI:49883"/>
    </ligand>
</feature>
<feature type="binding site" evidence="1">
    <location>
        <position position="64"/>
    </location>
    <ligand>
        <name>[4Fe-4S] cluster</name>
        <dbReference type="ChEBI" id="CHEBI:49883"/>
    </ligand>
</feature>
<feature type="binding site" evidence="1">
    <location>
        <position position="129"/>
    </location>
    <ligand>
        <name>[4Fe-4S] cluster</name>
        <dbReference type="ChEBI" id="CHEBI:49883"/>
    </ligand>
</feature>
<feature type="binding site" evidence="1">
    <location>
        <position position="158"/>
    </location>
    <ligand>
        <name>[4Fe-4S] cluster</name>
        <dbReference type="ChEBI" id="CHEBI:49883"/>
    </ligand>
</feature>
<organism>
    <name type="scientific">Salmonella paratyphi A (strain AKU_12601)</name>
    <dbReference type="NCBI Taxonomy" id="554290"/>
    <lineage>
        <taxon>Bacteria</taxon>
        <taxon>Pseudomonadati</taxon>
        <taxon>Pseudomonadota</taxon>
        <taxon>Gammaproteobacteria</taxon>
        <taxon>Enterobacterales</taxon>
        <taxon>Enterobacteriaceae</taxon>
        <taxon>Salmonella</taxon>
    </lineage>
</organism>
<accession>B5BCL9</accession>
<reference key="1">
    <citation type="journal article" date="2009" name="BMC Genomics">
        <title>Pseudogene accumulation in the evolutionary histories of Salmonella enterica serovars Paratyphi A and Typhi.</title>
        <authorList>
            <person name="Holt K.E."/>
            <person name="Thomson N.R."/>
            <person name="Wain J."/>
            <person name="Langridge G.C."/>
            <person name="Hasan R."/>
            <person name="Bhutta Z.A."/>
            <person name="Quail M.A."/>
            <person name="Norbertczak H."/>
            <person name="Walker D."/>
            <person name="Simmonds M."/>
            <person name="White B."/>
            <person name="Bason N."/>
            <person name="Mungall K."/>
            <person name="Dougan G."/>
            <person name="Parkhill J."/>
        </authorList>
    </citation>
    <scope>NUCLEOTIDE SEQUENCE [LARGE SCALE GENOMIC DNA]</scope>
    <source>
        <strain>AKU_12601</strain>
    </source>
</reference>
<name>NUOB_SALPK</name>
<evidence type="ECO:0000255" key="1">
    <source>
        <dbReference type="HAMAP-Rule" id="MF_01356"/>
    </source>
</evidence>
<proteinExistence type="inferred from homology"/>
<protein>
    <recommendedName>
        <fullName evidence="1">NADH-quinone oxidoreductase subunit B</fullName>
        <ecNumber evidence="1">7.1.1.-</ecNumber>
    </recommendedName>
    <alternativeName>
        <fullName evidence="1">NADH dehydrogenase I subunit B</fullName>
    </alternativeName>
    <alternativeName>
        <fullName evidence="1">NDH-1 subunit B</fullName>
    </alternativeName>
</protein>